<proteinExistence type="inferred from homology"/>
<comment type="function">
    <text evidence="1">Catalyzes the dephosphorylation of undecaprenyl diphosphate (UPP). Confers resistance to bacitracin.</text>
</comment>
<comment type="catalytic activity">
    <reaction evidence="1">
        <text>di-trans,octa-cis-undecaprenyl diphosphate + H2O = di-trans,octa-cis-undecaprenyl phosphate + phosphate + H(+)</text>
        <dbReference type="Rhea" id="RHEA:28094"/>
        <dbReference type="ChEBI" id="CHEBI:15377"/>
        <dbReference type="ChEBI" id="CHEBI:15378"/>
        <dbReference type="ChEBI" id="CHEBI:43474"/>
        <dbReference type="ChEBI" id="CHEBI:58405"/>
        <dbReference type="ChEBI" id="CHEBI:60392"/>
        <dbReference type="EC" id="3.6.1.27"/>
    </reaction>
</comment>
<comment type="subcellular location">
    <subcellularLocation>
        <location evidence="1">Cell inner membrane</location>
        <topology evidence="1">Multi-pass membrane protein</topology>
    </subcellularLocation>
</comment>
<comment type="miscellaneous">
    <text>Bacitracin is thought to be involved in the inhibition of peptidoglycan synthesis by sequestering undecaprenyl diphosphate, thereby reducing the pool of lipid carrier available.</text>
</comment>
<comment type="similarity">
    <text evidence="1">Belongs to the UppP family.</text>
</comment>
<name>UPPP_PSEF5</name>
<keyword id="KW-0046">Antibiotic resistance</keyword>
<keyword id="KW-0997">Cell inner membrane</keyword>
<keyword id="KW-1003">Cell membrane</keyword>
<keyword id="KW-0133">Cell shape</keyword>
<keyword id="KW-0961">Cell wall biogenesis/degradation</keyword>
<keyword id="KW-0378">Hydrolase</keyword>
<keyword id="KW-0472">Membrane</keyword>
<keyword id="KW-0573">Peptidoglycan synthesis</keyword>
<keyword id="KW-0812">Transmembrane</keyword>
<keyword id="KW-1133">Transmembrane helix</keyword>
<feature type="chain" id="PRO_0000227629" description="Undecaprenyl-diphosphatase">
    <location>
        <begin position="1"/>
        <end position="276"/>
    </location>
</feature>
<feature type="transmembrane region" description="Helical" evidence="1">
    <location>
        <begin position="43"/>
        <end position="63"/>
    </location>
</feature>
<feature type="transmembrane region" description="Helical" evidence="1">
    <location>
        <begin position="85"/>
        <end position="105"/>
    </location>
</feature>
<feature type="transmembrane region" description="Helical" evidence="1">
    <location>
        <begin position="109"/>
        <end position="129"/>
    </location>
</feature>
<feature type="transmembrane region" description="Helical" evidence="1">
    <location>
        <begin position="184"/>
        <end position="204"/>
    </location>
</feature>
<feature type="transmembrane region" description="Helical" evidence="1">
    <location>
        <begin position="218"/>
        <end position="238"/>
    </location>
</feature>
<feature type="transmembrane region" description="Helical" evidence="1">
    <location>
        <begin position="254"/>
        <end position="274"/>
    </location>
</feature>
<reference key="1">
    <citation type="journal article" date="2005" name="Nat. Biotechnol.">
        <title>Complete genome sequence of the plant commensal Pseudomonas fluorescens Pf-5.</title>
        <authorList>
            <person name="Paulsen I.T."/>
            <person name="Press C.M."/>
            <person name="Ravel J."/>
            <person name="Kobayashi D.Y."/>
            <person name="Myers G.S.A."/>
            <person name="Mavrodi D.V."/>
            <person name="DeBoy R.T."/>
            <person name="Seshadri R."/>
            <person name="Ren Q."/>
            <person name="Madupu R."/>
            <person name="Dodson R.J."/>
            <person name="Durkin A.S."/>
            <person name="Brinkac L.M."/>
            <person name="Daugherty S.C."/>
            <person name="Sullivan S.A."/>
            <person name="Rosovitz M.J."/>
            <person name="Gwinn M.L."/>
            <person name="Zhou L."/>
            <person name="Schneider D.J."/>
            <person name="Cartinhour S.W."/>
            <person name="Nelson W.C."/>
            <person name="Weidman J."/>
            <person name="Watkins K."/>
            <person name="Tran K."/>
            <person name="Khouri H."/>
            <person name="Pierson E.A."/>
            <person name="Pierson L.S. III"/>
            <person name="Thomashow L.S."/>
            <person name="Loper J.E."/>
        </authorList>
    </citation>
    <scope>NUCLEOTIDE SEQUENCE [LARGE SCALE GENOMIC DNA]</scope>
    <source>
        <strain>ATCC BAA-477 / NRRL B-23932 / Pf-5</strain>
    </source>
</reference>
<organism>
    <name type="scientific">Pseudomonas fluorescens (strain ATCC BAA-477 / NRRL B-23932 / Pf-5)</name>
    <dbReference type="NCBI Taxonomy" id="220664"/>
    <lineage>
        <taxon>Bacteria</taxon>
        <taxon>Pseudomonadati</taxon>
        <taxon>Pseudomonadota</taxon>
        <taxon>Gammaproteobacteria</taxon>
        <taxon>Pseudomonadales</taxon>
        <taxon>Pseudomonadaceae</taxon>
        <taxon>Pseudomonas</taxon>
    </lineage>
</organism>
<evidence type="ECO:0000255" key="1">
    <source>
        <dbReference type="HAMAP-Rule" id="MF_01006"/>
    </source>
</evidence>
<accession>Q4KC13</accession>
<protein>
    <recommendedName>
        <fullName evidence="1">Undecaprenyl-diphosphatase</fullName>
        <ecNumber evidence="1">3.6.1.27</ecNumber>
    </recommendedName>
    <alternativeName>
        <fullName evidence="1">Bacitracin resistance protein</fullName>
    </alternativeName>
    <alternativeName>
        <fullName evidence="1">Undecaprenyl pyrophosphate phosphatase</fullName>
    </alternativeName>
</protein>
<dbReference type="EC" id="3.6.1.27" evidence="1"/>
<dbReference type="EMBL" id="CP000076">
    <property type="protein sequence ID" value="AAY92384.1"/>
    <property type="molecule type" value="Genomic_DNA"/>
</dbReference>
<dbReference type="RefSeq" id="WP_011061401.1">
    <property type="nucleotide sequence ID" value="NC_004129.6"/>
</dbReference>
<dbReference type="SMR" id="Q4KC13"/>
<dbReference type="STRING" id="220664.PFL_3114"/>
<dbReference type="KEGG" id="pfl:PFL_3114"/>
<dbReference type="PATRIC" id="fig|220664.5.peg.3175"/>
<dbReference type="eggNOG" id="COG1968">
    <property type="taxonomic scope" value="Bacteria"/>
</dbReference>
<dbReference type="HOGENOM" id="CLU_060296_2_0_6"/>
<dbReference type="Proteomes" id="UP000008540">
    <property type="component" value="Chromosome"/>
</dbReference>
<dbReference type="GO" id="GO:0005886">
    <property type="term" value="C:plasma membrane"/>
    <property type="evidence" value="ECO:0007669"/>
    <property type="project" value="UniProtKB-SubCell"/>
</dbReference>
<dbReference type="GO" id="GO:0050380">
    <property type="term" value="F:undecaprenyl-diphosphatase activity"/>
    <property type="evidence" value="ECO:0007669"/>
    <property type="project" value="UniProtKB-UniRule"/>
</dbReference>
<dbReference type="GO" id="GO:0071555">
    <property type="term" value="P:cell wall organization"/>
    <property type="evidence" value="ECO:0007669"/>
    <property type="project" value="UniProtKB-KW"/>
</dbReference>
<dbReference type="GO" id="GO:0009252">
    <property type="term" value="P:peptidoglycan biosynthetic process"/>
    <property type="evidence" value="ECO:0007669"/>
    <property type="project" value="UniProtKB-KW"/>
</dbReference>
<dbReference type="GO" id="GO:0008360">
    <property type="term" value="P:regulation of cell shape"/>
    <property type="evidence" value="ECO:0007669"/>
    <property type="project" value="UniProtKB-KW"/>
</dbReference>
<dbReference type="GO" id="GO:0046677">
    <property type="term" value="P:response to antibiotic"/>
    <property type="evidence" value="ECO:0007669"/>
    <property type="project" value="UniProtKB-UniRule"/>
</dbReference>
<dbReference type="HAMAP" id="MF_01006">
    <property type="entry name" value="Undec_diphosphatase"/>
    <property type="match status" value="1"/>
</dbReference>
<dbReference type="InterPro" id="IPR003824">
    <property type="entry name" value="UppP"/>
</dbReference>
<dbReference type="NCBIfam" id="NF001389">
    <property type="entry name" value="PRK00281.1-2"/>
    <property type="match status" value="1"/>
</dbReference>
<dbReference type="NCBIfam" id="NF001390">
    <property type="entry name" value="PRK00281.1-4"/>
    <property type="match status" value="1"/>
</dbReference>
<dbReference type="NCBIfam" id="TIGR00753">
    <property type="entry name" value="undec_PP_bacA"/>
    <property type="match status" value="1"/>
</dbReference>
<dbReference type="PANTHER" id="PTHR30622">
    <property type="entry name" value="UNDECAPRENYL-DIPHOSPHATASE"/>
    <property type="match status" value="1"/>
</dbReference>
<dbReference type="PANTHER" id="PTHR30622:SF3">
    <property type="entry name" value="UNDECAPRENYL-DIPHOSPHATASE"/>
    <property type="match status" value="1"/>
</dbReference>
<dbReference type="Pfam" id="PF02673">
    <property type="entry name" value="BacA"/>
    <property type="match status" value="1"/>
</dbReference>
<sequence>MDLWTAAQALILGIVEGLTEFLPISSTGHQIIVADLLDFGGERAMAFNIIIQLGAILAVVWEFRRKILDVVIGLPTQPKAQRFTINLLIAFLPAVVLGVIFADLIHAYLFNPITVATALVVGGLIMLWAERRQHQVHAETVDDITWKDALKVGCAQCLAMIPGTSRSGSTIIGGLLFGLSRKTATEFSFFLAMPTMVGAAVYSGYKYRHLFQPDDFPVFAIGFVTAFVFAMIAVKGLLKFIASHSYAAFAWYRIAFGLLILATWQFGWVDWTAAKP</sequence>
<gene>
    <name evidence="1" type="primary">uppP</name>
    <name type="ordered locus">PFL_3114</name>
</gene>